<name>GB_EHV2</name>
<evidence type="ECO:0000250" key="1"/>
<evidence type="ECO:0000255" key="2">
    <source>
        <dbReference type="HAMAP-Rule" id="MF_04032"/>
    </source>
</evidence>
<evidence type="ECO:0000256" key="3">
    <source>
        <dbReference type="SAM" id="MobiDB-lite"/>
    </source>
</evidence>
<evidence type="ECO:0000305" key="4"/>
<proteinExistence type="inferred from homology"/>
<feature type="signal peptide" evidence="2">
    <location>
        <begin position="1"/>
        <end position="25"/>
    </location>
</feature>
<feature type="chain" id="PRO_0000406073" description="Envelope glycoprotein B" evidence="2">
    <location>
        <begin position="26"/>
        <end position="874"/>
    </location>
</feature>
<feature type="topological domain" description="Virion surface" evidence="2">
    <location>
        <begin position="26"/>
        <end position="727"/>
    </location>
</feature>
<feature type="transmembrane region" description="Helical" evidence="2">
    <location>
        <begin position="728"/>
        <end position="748"/>
    </location>
</feature>
<feature type="topological domain" description="Intravirion" evidence="2">
    <location>
        <begin position="749"/>
        <end position="874"/>
    </location>
</feature>
<feature type="region of interest" description="Involved in fusion and/or binding to host membrane" evidence="2">
    <location>
        <begin position="116"/>
        <end position="122"/>
    </location>
</feature>
<feature type="region of interest" description="Involved in fusion and/or binding to host membrane" evidence="2">
    <location>
        <begin position="200"/>
        <end position="208"/>
    </location>
</feature>
<feature type="region of interest" description="Disordered" evidence="3">
    <location>
        <begin position="412"/>
        <end position="450"/>
    </location>
</feature>
<feature type="region of interest" description="Hydrophobic membrane proximal region" evidence="2">
    <location>
        <begin position="673"/>
        <end position="725"/>
    </location>
</feature>
<feature type="region of interest" description="Disordered" evidence="3">
    <location>
        <begin position="830"/>
        <end position="874"/>
    </location>
</feature>
<feature type="short sequence motif" description="Internalization motif" evidence="2">
    <location>
        <begin position="836"/>
        <end position="839"/>
    </location>
</feature>
<feature type="site" description="Cleavage; by host furin" evidence="1">
    <location>
        <begin position="427"/>
        <end position="428"/>
    </location>
</feature>
<feature type="glycosylation site" description="N-linked (GlcNAc...) asparagine; by host" evidence="2">
    <location>
        <position position="171"/>
    </location>
</feature>
<feature type="glycosylation site" description="N-linked (GlcNAc...) asparagine; by host" evidence="2">
    <location>
        <position position="247"/>
    </location>
</feature>
<feature type="glycosylation site" description="N-linked (GlcNAc...) asparagine; by host" evidence="2">
    <location>
        <position position="281"/>
    </location>
</feature>
<feature type="glycosylation site" description="N-linked (GlcNAc...) asparagine; by host" evidence="2">
    <location>
        <position position="302"/>
    </location>
</feature>
<feature type="glycosylation site" description="N-linked (GlcNAc...) asparagine; by host" evidence="2">
    <location>
        <position position="323"/>
    </location>
</feature>
<feature type="glycosylation site" description="N-linked (GlcNAc...) asparagine; by host" evidence="2">
    <location>
        <position position="348"/>
    </location>
</feature>
<feature type="glycosylation site" description="N-linked (GlcNAc...) asparagine; by host" evidence="2">
    <location>
        <position position="356"/>
    </location>
</feature>
<feature type="glycosylation site" description="N-linked (GlcNAc...) asparagine; by host" evidence="2">
    <location>
        <position position="376"/>
    </location>
</feature>
<feature type="glycosylation site" description="N-linked (GlcNAc...) asparagine; by host" evidence="2">
    <location>
        <position position="409"/>
    </location>
</feature>
<feature type="glycosylation site" description="N-linked (GlcNAc...) asparagine; by host" evidence="2">
    <location>
        <position position="412"/>
    </location>
</feature>
<feature type="glycosylation site" description="N-linked (GlcNAc...) asparagine; by host" evidence="2">
    <location>
        <position position="444"/>
    </location>
</feature>
<feature type="glycosylation site" description="N-linked (GlcNAc...) asparagine; by host" evidence="2">
    <location>
        <position position="558"/>
    </location>
</feature>
<feature type="glycosylation site" description="N-linked (GlcNAc...) asparagine; by host" evidence="2">
    <location>
        <position position="610"/>
    </location>
</feature>
<feature type="glycosylation site" description="N-linked (GlcNAc...) asparagine; by host" evidence="2">
    <location>
        <position position="624"/>
    </location>
</feature>
<feature type="disulfide bond" evidence="2">
    <location>
        <begin position="59"/>
        <end position="523"/>
    </location>
</feature>
<feature type="disulfide bond" evidence="2">
    <location>
        <begin position="77"/>
        <end position="479"/>
    </location>
</feature>
<feature type="disulfide bond" evidence="2">
    <location>
        <begin position="149"/>
        <end position="214"/>
    </location>
</feature>
<feature type="disulfide bond" evidence="2">
    <location>
        <begin position="306"/>
        <end position="353"/>
    </location>
</feature>
<feature type="disulfide bond" evidence="2">
    <location>
        <begin position="546"/>
        <end position="583"/>
    </location>
</feature>
<protein>
    <recommendedName>
        <fullName evidence="2">Envelope glycoprotein B</fullName>
        <shortName evidence="2">gB</shortName>
    </recommendedName>
</protein>
<sequence length="874" mass="98486">MGVGGGPRVVLCLWCVAALLCQGVAQEVVAETTTPFATHRPEVVAEENPANPFLPFRVCGASPTGGEIFRFPLEESCPNTEDKDHIEGIALIYKTNIVPYVFNVRKYRKIMTSTTIYKGWSEDAITNQHTRSYAVPLYEVQMMDHYYQCFSAVQVNEGGHVNTYYDRDGWNETAFLKPADGLTSSITRYQSQPEVYATPRNLLWSYTTRTTVNCEVTEMSARSMKPFEFFVTSVGDTIEMSPFLKENGTEPEKILKRPHSIQLLKNYAVTKYGVGLGQADNATRFFAIFGDYSLSWKATTENSSYCDLILWKGFSNAIQTQHNSSLHFIANDITASFSTPLEEEANFNETFKCIWNNTQEEIQKKLKEVEKTHRPNGTAKVYKTTGNLYIVWQPLIQIDLLDTHAKLYNLTNATASPTSTPTTSPRRRRRDTSSVSGGGNNGDNSTKEESVAASQVQFAYDNLRKSINRVLGELSRAWCREQYRASLMWYELSKINPTSVMSAIYGRPVSAKLIGDVVSVSDCISVDQKSVFVHKNMKVPGKEDLCYTRPVVGFKFINGSELFAGQLGPRNEIVLSTSQVEVCQHSCEHYFQAGNQMYKYKDYYYVSTLNLTDIPTLHTMITLNLSLVENIDFKVIELYSKTEKRLSNVFDIETMFREYNYYTQNLNGLRKDLDDSIDHGRDSFIQTLGDIMQDLGTIGKVVVNVASGVFSLFGSIVSGVISFFKNPFGGMLLIVLIIAGVVVVYLFMTRSRSIYSAPIRMLYPGVERAAQEPGAHPVSEDQIRNILMGMHQFQQRQRAEEEARREEEVKGKRTLFEVIRDSATSVLRRRRGGGGYQRLQRDGSDDEGDYEPLRRQDGGYDDVDVEAGTADTGV</sequence>
<gene>
    <name evidence="2" type="primary">gB</name>
    <name type="synonym">8</name>
</gene>
<organismHost>
    <name type="scientific">Equus caballus</name>
    <name type="common">Horse</name>
    <dbReference type="NCBI Taxonomy" id="9796"/>
</organismHost>
<keyword id="KW-1015">Disulfide bond</keyword>
<keyword id="KW-0325">Glycoprotein</keyword>
<keyword id="KW-1032">Host cell membrane</keyword>
<keyword id="KW-1039">Host endosome</keyword>
<keyword id="KW-1040">Host Golgi apparatus</keyword>
<keyword id="KW-1043">Host membrane</keyword>
<keyword id="KW-0945">Host-virus interaction</keyword>
<keyword id="KW-0472">Membrane</keyword>
<keyword id="KW-1185">Reference proteome</keyword>
<keyword id="KW-0732">Signal</keyword>
<keyword id="KW-0812">Transmembrane</keyword>
<keyword id="KW-1133">Transmembrane helix</keyword>
<keyword id="KW-1161">Viral attachment to host cell</keyword>
<keyword id="KW-0261">Viral envelope protein</keyword>
<keyword id="KW-0946">Virion</keyword>
<keyword id="KW-1160">Virus entry into host cell</keyword>
<organism>
    <name type="scientific">Equine herpesvirus 2 (strain 86/87)</name>
    <name type="common">EHV-2</name>
    <dbReference type="NCBI Taxonomy" id="82831"/>
    <lineage>
        <taxon>Viruses</taxon>
        <taxon>Duplodnaviria</taxon>
        <taxon>Heunggongvirae</taxon>
        <taxon>Peploviricota</taxon>
        <taxon>Herviviricetes</taxon>
        <taxon>Herpesvirales</taxon>
        <taxon>Orthoherpesviridae</taxon>
        <taxon>Gammaherpesvirinae</taxon>
        <taxon>Percavirus</taxon>
        <taxon>Percavirus equidgamma2</taxon>
        <taxon>Equid gammaherpesvirus 2</taxon>
    </lineage>
</organism>
<reference key="1">
    <citation type="journal article" date="1995" name="J. Mol. Biol.">
        <title>The DNA sequence of equine herpesvirus 2.</title>
        <authorList>
            <person name="Telford E.A.R."/>
            <person name="Watson M.S."/>
            <person name="Aird H.C."/>
            <person name="Perry J."/>
            <person name="Davison A.J."/>
        </authorList>
    </citation>
    <scope>NUCLEOTIDE SEQUENCE [LARGE SCALE GENOMIC DNA]</scope>
</reference>
<dbReference type="EMBL" id="U20824">
    <property type="protein sequence ID" value="AAC13795.1"/>
    <property type="molecule type" value="Genomic_DNA"/>
</dbReference>
<dbReference type="PIR" id="S55602">
    <property type="entry name" value="S55602"/>
</dbReference>
<dbReference type="SMR" id="Q66613"/>
<dbReference type="GlyCosmos" id="Q66613">
    <property type="glycosylation" value="14 sites, No reported glycans"/>
</dbReference>
<dbReference type="KEGG" id="vg:1461084"/>
<dbReference type="Proteomes" id="UP000007083">
    <property type="component" value="Segment"/>
</dbReference>
<dbReference type="GO" id="GO:0044175">
    <property type="term" value="C:host cell endosome membrane"/>
    <property type="evidence" value="ECO:0007669"/>
    <property type="project" value="UniProtKB-SubCell"/>
</dbReference>
<dbReference type="GO" id="GO:0044178">
    <property type="term" value="C:host cell Golgi membrane"/>
    <property type="evidence" value="ECO:0007669"/>
    <property type="project" value="UniProtKB-SubCell"/>
</dbReference>
<dbReference type="GO" id="GO:0020002">
    <property type="term" value="C:host cell plasma membrane"/>
    <property type="evidence" value="ECO:0007669"/>
    <property type="project" value="UniProtKB-SubCell"/>
</dbReference>
<dbReference type="GO" id="GO:0016020">
    <property type="term" value="C:membrane"/>
    <property type="evidence" value="ECO:0007669"/>
    <property type="project" value="UniProtKB-KW"/>
</dbReference>
<dbReference type="GO" id="GO:0019031">
    <property type="term" value="C:viral envelope"/>
    <property type="evidence" value="ECO:0007669"/>
    <property type="project" value="UniProtKB-KW"/>
</dbReference>
<dbReference type="GO" id="GO:0055036">
    <property type="term" value="C:virion membrane"/>
    <property type="evidence" value="ECO:0007669"/>
    <property type="project" value="UniProtKB-SubCell"/>
</dbReference>
<dbReference type="GO" id="GO:0046718">
    <property type="term" value="P:symbiont entry into host cell"/>
    <property type="evidence" value="ECO:0007669"/>
    <property type="project" value="UniProtKB-KW"/>
</dbReference>
<dbReference type="GO" id="GO:0019062">
    <property type="term" value="P:virion attachment to host cell"/>
    <property type="evidence" value="ECO:0007669"/>
    <property type="project" value="UniProtKB-KW"/>
</dbReference>
<dbReference type="Gene3D" id="1.20.5.1890">
    <property type="match status" value="1"/>
</dbReference>
<dbReference type="Gene3D" id="2.30.29.100">
    <property type="match status" value="2"/>
</dbReference>
<dbReference type="Gene3D" id="2.30.30.1230">
    <property type="match status" value="1"/>
</dbReference>
<dbReference type="Gene3D" id="6.10.250.3280">
    <property type="match status" value="1"/>
</dbReference>
<dbReference type="HAMAP" id="MF_04032">
    <property type="entry name" value="HSV_GB"/>
    <property type="match status" value="1"/>
</dbReference>
<dbReference type="InterPro" id="IPR035377">
    <property type="entry name" value="Glycoprot_B_PH1"/>
</dbReference>
<dbReference type="InterPro" id="IPR035381">
    <property type="entry name" value="Glycoprot_B_PH2"/>
</dbReference>
<dbReference type="InterPro" id="IPR038631">
    <property type="entry name" value="Glycoprot_B_PH2_sf"/>
</dbReference>
<dbReference type="InterPro" id="IPR055341">
    <property type="entry name" value="Glycoprotein_B_ecto_C"/>
</dbReference>
<dbReference type="InterPro" id="IPR000234">
    <property type="entry name" value="Herpes_Glycoprot_B"/>
</dbReference>
<dbReference type="Pfam" id="PF17416">
    <property type="entry name" value="Glycoprot_B_PH1"/>
    <property type="match status" value="1"/>
</dbReference>
<dbReference type="Pfam" id="PF17417">
    <property type="entry name" value="Glycoprot_B_PH2"/>
    <property type="match status" value="1"/>
</dbReference>
<dbReference type="Pfam" id="PF00606">
    <property type="entry name" value="Glycoprotein_B"/>
    <property type="match status" value="1"/>
</dbReference>
<dbReference type="SUPFAM" id="SSF161008">
    <property type="entry name" value="Viral glycoprotein ectodomain-like"/>
    <property type="match status" value="1"/>
</dbReference>
<accession>Q66613</accession>
<comment type="function">
    <text evidence="2">Envelope glycoprotein that forms spikes at the surface of virion envelope. Essential for the initial attachment to heparan sulfate moieties of the host cell surface proteoglycans. Involved in fusion of viral and cellular membranes leading to virus entry into the host cell. Following initial binding to its host receptors, membrane fusion is mediated by the fusion machinery composed at least of gB and the heterodimer gH/gL. May be involved in the fusion between the virion envelope and the outer nuclear membrane during virion egress.</text>
</comment>
<comment type="subunit">
    <text evidence="2">Homotrimer; disulfide-linked. Binds to heparan sulfate proteoglycans. Interacts with gH/gL heterodimer.</text>
</comment>
<comment type="subcellular location">
    <subcellularLocation>
        <location evidence="2">Virion membrane</location>
        <topology evidence="2">Single-pass type I membrane protein</topology>
    </subcellularLocation>
    <subcellularLocation>
        <location evidence="2">Host cell membrane</location>
        <topology evidence="2">Single-pass type I membrane protein</topology>
    </subcellularLocation>
    <subcellularLocation>
        <location evidence="2">Host endosome membrane</location>
        <topology evidence="2">Single-pass type I membrane protein</topology>
    </subcellularLocation>
    <subcellularLocation>
        <location evidence="2">Host Golgi apparatus membrane</location>
        <topology evidence="2">Single-pass type I membrane protein</topology>
    </subcellularLocation>
    <text evidence="2">During virion morphogenesis, this protein probably accumulates in the endosomes and trans-Golgi where secondary envelopment occurs. It is probably transported to the cell surface from where it is endocytosed and directed to the trans-Golgi network (TGN).</text>
</comment>
<comment type="PTM">
    <text evidence="4">A proteolytic cleavage by host furin generates two subunits that remain linked by disulfide bonds.</text>
</comment>
<comment type="similarity">
    <text evidence="2">Belongs to the herpesviridae glycoprotein B family.</text>
</comment>